<dbReference type="EMBL" id="BA000022">
    <property type="protein sequence ID" value="BAA17312.1"/>
    <property type="molecule type" value="Genomic_DNA"/>
</dbReference>
<dbReference type="PIR" id="S77465">
    <property type="entry name" value="S77465"/>
</dbReference>
<dbReference type="SMR" id="P20804"/>
<dbReference type="FunCoup" id="P20804">
    <property type="interactions" value="339"/>
</dbReference>
<dbReference type="IntAct" id="P20804">
    <property type="interactions" value="2"/>
</dbReference>
<dbReference type="STRING" id="1148.gene:10498175"/>
<dbReference type="PaxDb" id="1148-1652390"/>
<dbReference type="EnsemblBacteria" id="BAA17312">
    <property type="protein sequence ID" value="BAA17312"/>
    <property type="gene ID" value="BAA17312"/>
</dbReference>
<dbReference type="KEGG" id="syn:ssl2084"/>
<dbReference type="eggNOG" id="COG0236">
    <property type="taxonomic scope" value="Bacteria"/>
</dbReference>
<dbReference type="InParanoid" id="P20804"/>
<dbReference type="PhylomeDB" id="P20804"/>
<dbReference type="UniPathway" id="UPA00094"/>
<dbReference type="Proteomes" id="UP000001425">
    <property type="component" value="Chromosome"/>
</dbReference>
<dbReference type="GO" id="GO:0005829">
    <property type="term" value="C:cytosol"/>
    <property type="evidence" value="ECO:0000318"/>
    <property type="project" value="GO_Central"/>
</dbReference>
<dbReference type="GO" id="GO:0016020">
    <property type="term" value="C:membrane"/>
    <property type="evidence" value="ECO:0007669"/>
    <property type="project" value="GOC"/>
</dbReference>
<dbReference type="GO" id="GO:0000035">
    <property type="term" value="F:acyl binding"/>
    <property type="evidence" value="ECO:0000318"/>
    <property type="project" value="GO_Central"/>
</dbReference>
<dbReference type="GO" id="GO:0000036">
    <property type="term" value="F:acyl carrier activity"/>
    <property type="evidence" value="ECO:0000318"/>
    <property type="project" value="GO_Central"/>
</dbReference>
<dbReference type="GO" id="GO:0009245">
    <property type="term" value="P:lipid A biosynthetic process"/>
    <property type="evidence" value="ECO:0000318"/>
    <property type="project" value="GO_Central"/>
</dbReference>
<dbReference type="FunFam" id="1.10.1200.10:FF:000006">
    <property type="entry name" value="Acyl carrier protein"/>
    <property type="match status" value="1"/>
</dbReference>
<dbReference type="Gene3D" id="1.10.1200.10">
    <property type="entry name" value="ACP-like"/>
    <property type="match status" value="1"/>
</dbReference>
<dbReference type="HAMAP" id="MF_01217">
    <property type="entry name" value="Acyl_carrier"/>
    <property type="match status" value="1"/>
</dbReference>
<dbReference type="InterPro" id="IPR003231">
    <property type="entry name" value="ACP"/>
</dbReference>
<dbReference type="InterPro" id="IPR036736">
    <property type="entry name" value="ACP-like_sf"/>
</dbReference>
<dbReference type="InterPro" id="IPR009081">
    <property type="entry name" value="PP-bd_ACP"/>
</dbReference>
<dbReference type="InterPro" id="IPR006162">
    <property type="entry name" value="Ppantetheine_attach_site"/>
</dbReference>
<dbReference type="NCBIfam" id="TIGR00517">
    <property type="entry name" value="acyl_carrier"/>
    <property type="match status" value="1"/>
</dbReference>
<dbReference type="NCBIfam" id="NF002148">
    <property type="entry name" value="PRK00982.1-2"/>
    <property type="match status" value="1"/>
</dbReference>
<dbReference type="NCBIfam" id="NF002149">
    <property type="entry name" value="PRK00982.1-3"/>
    <property type="match status" value="1"/>
</dbReference>
<dbReference type="NCBIfam" id="NF002150">
    <property type="entry name" value="PRK00982.1-4"/>
    <property type="match status" value="1"/>
</dbReference>
<dbReference type="NCBIfam" id="NF002151">
    <property type="entry name" value="PRK00982.1-5"/>
    <property type="match status" value="1"/>
</dbReference>
<dbReference type="PANTHER" id="PTHR20863">
    <property type="entry name" value="ACYL CARRIER PROTEIN"/>
    <property type="match status" value="1"/>
</dbReference>
<dbReference type="PANTHER" id="PTHR20863:SF76">
    <property type="entry name" value="CARRIER DOMAIN-CONTAINING PROTEIN"/>
    <property type="match status" value="1"/>
</dbReference>
<dbReference type="Pfam" id="PF00550">
    <property type="entry name" value="PP-binding"/>
    <property type="match status" value="1"/>
</dbReference>
<dbReference type="SUPFAM" id="SSF47336">
    <property type="entry name" value="ACP-like"/>
    <property type="match status" value="1"/>
</dbReference>
<dbReference type="PROSITE" id="PS50075">
    <property type="entry name" value="CARRIER"/>
    <property type="match status" value="1"/>
</dbReference>
<dbReference type="PROSITE" id="PS00012">
    <property type="entry name" value="PHOSPHOPANTETHEINE"/>
    <property type="match status" value="1"/>
</dbReference>
<gene>
    <name evidence="1" type="primary">acpP</name>
    <name type="synonym">acp</name>
    <name type="ordered locus">ssl2084</name>
</gene>
<accession>P20804</accession>
<accession>P73284</accession>
<reference key="1">
    <citation type="journal article" date="1996" name="DNA Res.">
        <title>Sequence analysis of the genome of the unicellular cyanobacterium Synechocystis sp. strain PCC6803. II. Sequence determination of the entire genome and assignment of potential protein-coding regions.</title>
        <authorList>
            <person name="Kaneko T."/>
            <person name="Sato S."/>
            <person name="Kotani H."/>
            <person name="Tanaka A."/>
            <person name="Asamizu E."/>
            <person name="Nakamura Y."/>
            <person name="Miyajima N."/>
            <person name="Hirosawa M."/>
            <person name="Sugiura M."/>
            <person name="Sasamoto S."/>
            <person name="Kimura T."/>
            <person name="Hosouchi T."/>
            <person name="Matsuno A."/>
            <person name="Muraki A."/>
            <person name="Nakazaki N."/>
            <person name="Naruo K."/>
            <person name="Okumura S."/>
            <person name="Shimpo S."/>
            <person name="Takeuchi C."/>
            <person name="Wada T."/>
            <person name="Watanabe A."/>
            <person name="Yamada M."/>
            <person name="Yasuda M."/>
            <person name="Tabata S."/>
        </authorList>
    </citation>
    <scope>NUCLEOTIDE SEQUENCE [LARGE SCALE GENOMIC DNA]</scope>
    <source>
        <strain>ATCC 27184 / PCC 6803 / Kazusa</strain>
    </source>
</reference>
<reference key="2">
    <citation type="journal article" date="1990" name="Eur. J. Biochem.">
        <title>Purification and characterization of acyl carrier protein from two cyanobacteria species.</title>
        <authorList>
            <person name="Froehlich J.E."/>
            <person name="Poorman R."/>
            <person name="Reardon E."/>
            <person name="Barnum S.R."/>
            <person name="Jaworski J.G."/>
        </authorList>
    </citation>
    <scope>PROTEIN SEQUENCE OF 1-61</scope>
    <scope>NUCLEOTIDE SEQUENCE [GENOMIC DNA] OF 21-45</scope>
    <source>
        <strain>ATCC 27184 / PCC 6803 / Kazusa</strain>
    </source>
</reference>
<keyword id="KW-0963">Cytoplasm</keyword>
<keyword id="KW-0903">Direct protein sequencing</keyword>
<keyword id="KW-0275">Fatty acid biosynthesis</keyword>
<keyword id="KW-0276">Fatty acid metabolism</keyword>
<keyword id="KW-0444">Lipid biosynthesis</keyword>
<keyword id="KW-0443">Lipid metabolism</keyword>
<keyword id="KW-0596">Phosphopantetheine</keyword>
<keyword id="KW-0597">Phosphoprotein</keyword>
<keyword id="KW-1185">Reference proteome</keyword>
<evidence type="ECO:0000255" key="1">
    <source>
        <dbReference type="HAMAP-Rule" id="MF_01217"/>
    </source>
</evidence>
<evidence type="ECO:0000255" key="2">
    <source>
        <dbReference type="PROSITE-ProRule" id="PRU00258"/>
    </source>
</evidence>
<evidence type="ECO:0000305" key="3"/>
<organism>
    <name type="scientific">Synechocystis sp. (strain ATCC 27184 / PCC 6803 / Kazusa)</name>
    <dbReference type="NCBI Taxonomy" id="1111708"/>
    <lineage>
        <taxon>Bacteria</taxon>
        <taxon>Bacillati</taxon>
        <taxon>Cyanobacteriota</taxon>
        <taxon>Cyanophyceae</taxon>
        <taxon>Synechococcales</taxon>
        <taxon>Merismopediaceae</taxon>
        <taxon>Synechocystis</taxon>
    </lineage>
</organism>
<proteinExistence type="evidence at protein level"/>
<name>ACP_SYNY3</name>
<protein>
    <recommendedName>
        <fullName evidence="1">Acyl carrier protein</fullName>
        <shortName evidence="1">ACP</shortName>
    </recommendedName>
</protein>
<sequence>MNQEIFEKVKKIVVEQLEVDPDKVTPDATFAEDLGADSLDTVELVMALEEEFDIEIPDEVAETIDTVGKAVEHIESK</sequence>
<comment type="function">
    <text>Carrier of the growing fatty acid chain in fatty acid biosynthesis.</text>
</comment>
<comment type="pathway">
    <text evidence="1">Lipid metabolism; fatty acid biosynthesis.</text>
</comment>
<comment type="subcellular location">
    <subcellularLocation>
        <location evidence="1">Cytoplasm</location>
    </subcellularLocation>
</comment>
<comment type="PTM">
    <text>4'-phosphopantetheine is transferred from CoA to a specific serine of apo-ACP by AcpS. This modification is essential for activity because fatty acids are bound in thioester linkage to the sulfhydryl of the prosthetic group.</text>
</comment>
<comment type="similarity">
    <text evidence="1">Belongs to the acyl carrier protein (ACP) family.</text>
</comment>
<feature type="chain" id="PRO_0000180207" description="Acyl carrier protein">
    <location>
        <begin position="1"/>
        <end position="77"/>
    </location>
</feature>
<feature type="domain" description="Carrier" evidence="2">
    <location>
        <begin position="3"/>
        <end position="77"/>
    </location>
</feature>
<feature type="modified residue" description="O-(pantetheine 4'-phosphoryl)serine" evidence="2">
    <location>
        <position position="38"/>
    </location>
</feature>
<feature type="sequence conflict" description="In Ref. 2; AA sequence." evidence="3" ref="2">
    <original>N</original>
    <variation>D</variation>
    <location>
        <position position="2"/>
    </location>
</feature>
<feature type="sequence conflict" description="In Ref. 2; AA sequence." evidence="3" ref="2">
    <original>K</original>
    <variation>G</variation>
    <location>
        <position position="23"/>
    </location>
</feature>